<geneLocation type="plasmid">
    <name>pIB1</name>
</geneLocation>
<geneLocation type="plasmid">
    <name>pYV</name>
</geneLocation>
<keyword id="KW-0002">3D-structure</keyword>
<keyword id="KW-0614">Plasmid</keyword>
<keyword id="KW-0653">Protein transport</keyword>
<keyword id="KW-0813">Transport</keyword>
<keyword id="KW-0843">Virulence</keyword>
<comment type="function">
    <text>Component of the Yop secretion machinery.</text>
</comment>
<comment type="similarity">
    <text evidence="1">Belongs to the FliN/MopA/SpaO family.</text>
</comment>
<accession>P40296</accession>
<accession>Q663J6</accession>
<organism>
    <name type="scientific">Yersinia pseudotuberculosis serotype I (strain IP32953)</name>
    <dbReference type="NCBI Taxonomy" id="273123"/>
    <lineage>
        <taxon>Bacteria</taxon>
        <taxon>Pseudomonadati</taxon>
        <taxon>Pseudomonadota</taxon>
        <taxon>Gammaproteobacteria</taxon>
        <taxon>Enterobacterales</taxon>
        <taxon>Yersiniaceae</taxon>
        <taxon>Yersinia</taxon>
    </lineage>
</organism>
<gene>
    <name type="primary">yscQ</name>
    <name type="ordered locus">pYV0070</name>
</gene>
<sequence>MSLLTLPQAKLSELSLRQRLSHYQQNYLWEEGKLELTVSEPPSSLNCILQLQWKGTHFTLYCFGNDLANWLTADLLGAPFFTLPKELQLALLERQTVFLPKLVCNDIATASLSVTQPLLSLRLSRDNAHISFWLTSAEALFALLPARPNSERIPLPILISLRWHKVYLTLDEVDSLRLGDVLLAPEGSGPNSPVLAYVGENPWGYFQLQSNKLEFIGMSHESDELNPEPLTDLNQLPVQVSFEVGRQILDWHTLTSLEPGSLIDLTTPVDGEVRLLANGRLLGHGRLVEIQGRLGVRIERLTEVTIS</sequence>
<reference key="1">
    <citation type="journal article" date="1994" name="J. Bacteriol.">
        <title>The lcrB (yscN/U) gene cluster of Yersinia pseudotuberculosis is involved in Yop secretion and shows high homology to the spa gene clusters of Shigella flexneri and Salmonella typhimurium.</title>
        <authorList>
            <person name="Bergman T."/>
            <person name="Erickson K."/>
            <person name="Galyov E."/>
            <person name="Persson C."/>
            <person name="Wolf-Watz H."/>
        </authorList>
    </citation>
    <scope>NUCLEOTIDE SEQUENCE [GENOMIC DNA]</scope>
    <source>
        <strain>YPIII / Serotype O:3</strain>
        <plasmid>pIB1</plasmid>
    </source>
</reference>
<reference key="2">
    <citation type="journal article" date="2004" name="Proc. Natl. Acad. Sci. U.S.A.">
        <title>Insights into the evolution of Yersinia pestis through whole-genome comparison with Yersinia pseudotuberculosis.</title>
        <authorList>
            <person name="Chain P.S.G."/>
            <person name="Carniel E."/>
            <person name="Larimer F.W."/>
            <person name="Lamerdin J."/>
            <person name="Stoutland P.O."/>
            <person name="Regala W.M."/>
            <person name="Georgescu A.M."/>
            <person name="Vergez L.M."/>
            <person name="Land M.L."/>
            <person name="Motin V.L."/>
            <person name="Brubaker R.R."/>
            <person name="Fowler J."/>
            <person name="Hinnebusch J."/>
            <person name="Marceau M."/>
            <person name="Medigue C."/>
            <person name="Simonet M."/>
            <person name="Chenal-Francisque V."/>
            <person name="Souza B."/>
            <person name="Dacheux D."/>
            <person name="Elliott J.M."/>
            <person name="Derbise A."/>
            <person name="Hauser L.J."/>
            <person name="Garcia E."/>
        </authorList>
    </citation>
    <scope>NUCLEOTIDE SEQUENCE [LARGE SCALE GENOMIC DNA]</scope>
    <source>
        <strain>IP32953</strain>
        <plasmid>pYV</plasmid>
    </source>
</reference>
<dbReference type="EMBL" id="L25667">
    <property type="protein sequence ID" value="AAA27677.1"/>
    <property type="molecule type" value="Genomic_DNA"/>
</dbReference>
<dbReference type="EMBL" id="BX936399">
    <property type="protein sequence ID" value="CAF25413.1"/>
    <property type="molecule type" value="Genomic_DNA"/>
</dbReference>
<dbReference type="RefSeq" id="WP_002212948.1">
    <property type="nucleotide sequence ID" value="NZ_CP009711.1"/>
</dbReference>
<dbReference type="PDB" id="3UEP">
    <property type="method" value="X-ray"/>
    <property type="resolution" value="2.25 A"/>
    <property type="chains" value="A/B=220-307"/>
</dbReference>
<dbReference type="PDBsum" id="3UEP"/>
<dbReference type="SMR" id="P40296"/>
<dbReference type="KEGG" id="ypo:BZ17_4264"/>
<dbReference type="KEGG" id="yps:pYV0070"/>
<dbReference type="PATRIC" id="fig|273123.14.peg.4500"/>
<dbReference type="EvolutionaryTrace" id="P40296"/>
<dbReference type="Proteomes" id="UP000001011">
    <property type="component" value="Plasmid pYV"/>
</dbReference>
<dbReference type="GO" id="GO:0071978">
    <property type="term" value="P:bacterial-type flagellum-dependent swarming motility"/>
    <property type="evidence" value="ECO:0007669"/>
    <property type="project" value="TreeGrafter"/>
</dbReference>
<dbReference type="GO" id="GO:0050918">
    <property type="term" value="P:positive chemotaxis"/>
    <property type="evidence" value="ECO:0007669"/>
    <property type="project" value="TreeGrafter"/>
</dbReference>
<dbReference type="GO" id="GO:0030254">
    <property type="term" value="P:protein secretion by the type III secretion system"/>
    <property type="evidence" value="ECO:0007669"/>
    <property type="project" value="InterPro"/>
</dbReference>
<dbReference type="Gene3D" id="2.30.330.10">
    <property type="entry name" value="SpoA-like"/>
    <property type="match status" value="1"/>
</dbReference>
<dbReference type="InterPro" id="IPR001543">
    <property type="entry name" value="FliN-like_C"/>
</dbReference>
<dbReference type="InterPro" id="IPR036429">
    <property type="entry name" value="SpoA-like_sf"/>
</dbReference>
<dbReference type="InterPro" id="IPR003283">
    <property type="entry name" value="T3SS_OMP_SpaO"/>
</dbReference>
<dbReference type="InterPro" id="IPR013385">
    <property type="entry name" value="T3SS_SpaO/YscQ/SpaO"/>
</dbReference>
<dbReference type="NCBIfam" id="TIGR02551">
    <property type="entry name" value="SpaO_YscQ"/>
    <property type="match status" value="1"/>
</dbReference>
<dbReference type="PANTHER" id="PTHR30034">
    <property type="entry name" value="FLAGELLAR MOTOR SWITCH PROTEIN FLIM"/>
    <property type="match status" value="1"/>
</dbReference>
<dbReference type="PANTHER" id="PTHR30034:SF6">
    <property type="entry name" value="YOP PROTEINS TRANSLOCATION PROTEIN Q"/>
    <property type="match status" value="1"/>
</dbReference>
<dbReference type="Pfam" id="PF01052">
    <property type="entry name" value="FliMN_C"/>
    <property type="match status" value="1"/>
</dbReference>
<dbReference type="PRINTS" id="PR01339">
    <property type="entry name" value="TYPE3OMOPROT"/>
</dbReference>
<dbReference type="SUPFAM" id="SSF101801">
    <property type="entry name" value="Surface presentation of antigens (SPOA)"/>
    <property type="match status" value="1"/>
</dbReference>
<feature type="chain" id="PRO_0000184131" description="Yop proteins translocation protein Q">
    <location>
        <begin position="1"/>
        <end position="307"/>
    </location>
</feature>
<feature type="sequence conflict" description="In Ref. 1; AAA27677." evidence="1" ref="1">
    <original>N</original>
    <variation>D</variation>
    <location>
        <position position="65"/>
    </location>
</feature>
<feature type="sequence conflict" description="In Ref. 1; AAA27677." evidence="1" ref="1">
    <original>I</original>
    <variation>L</variation>
    <location>
        <position position="159"/>
    </location>
</feature>
<feature type="helix" evidence="2">
    <location>
        <begin position="233"/>
        <end position="235"/>
    </location>
</feature>
<feature type="strand" evidence="2">
    <location>
        <begin position="237"/>
        <end position="245"/>
    </location>
</feature>
<feature type="strand" evidence="2">
    <location>
        <begin position="248"/>
        <end position="250"/>
    </location>
</feature>
<feature type="helix" evidence="2">
    <location>
        <begin position="251"/>
        <end position="256"/>
    </location>
</feature>
<feature type="strand" evidence="2">
    <location>
        <begin position="262"/>
        <end position="270"/>
    </location>
</feature>
<feature type="strand" evidence="2">
    <location>
        <begin position="272"/>
        <end position="277"/>
    </location>
</feature>
<feature type="strand" evidence="2">
    <location>
        <begin position="280"/>
        <end position="290"/>
    </location>
</feature>
<feature type="strand" evidence="2">
    <location>
        <begin position="293"/>
        <end position="301"/>
    </location>
</feature>
<name>YSCQ_YERPS</name>
<proteinExistence type="evidence at protein level"/>
<evidence type="ECO:0000305" key="1"/>
<evidence type="ECO:0007829" key="2">
    <source>
        <dbReference type="PDB" id="3UEP"/>
    </source>
</evidence>
<protein>
    <recommendedName>
        <fullName>Yop proteins translocation protein Q</fullName>
    </recommendedName>
</protein>